<dbReference type="EMBL" id="AY562553">
    <property type="protein sequence ID" value="AAT68457.1"/>
    <property type="molecule type" value="mRNA"/>
</dbReference>
<dbReference type="EMBL" id="CR589882">
    <property type="protein sequence ID" value="CAK04546.1"/>
    <property type="molecule type" value="Genomic_DNA"/>
</dbReference>
<dbReference type="RefSeq" id="NP_001076421.2">
    <property type="nucleotide sequence ID" value="NM_001082952.2"/>
</dbReference>
<dbReference type="RefSeq" id="XP_068080971.1">
    <property type="nucleotide sequence ID" value="XM_068224870.1"/>
</dbReference>
<dbReference type="RefSeq" id="XP_068080972.1">
    <property type="nucleotide sequence ID" value="XM_068224871.1"/>
</dbReference>
<dbReference type="SMR" id="Q1L8W0"/>
<dbReference type="FunCoup" id="Q1L8W0">
    <property type="interactions" value="861"/>
</dbReference>
<dbReference type="STRING" id="7955.ENSDARP00000141791"/>
<dbReference type="PaxDb" id="7955-ENSDARP00000118751"/>
<dbReference type="Ensembl" id="ENSDART00000169895">
    <property type="protein sequence ID" value="ENSDARP00000141791"/>
    <property type="gene ID" value="ENSDARG00000028228"/>
</dbReference>
<dbReference type="Ensembl" id="ENSDART00000186463">
    <property type="protein sequence ID" value="ENSDARP00000144804"/>
    <property type="gene ID" value="ENSDARG00000028228"/>
</dbReference>
<dbReference type="GeneID" id="100003157"/>
<dbReference type="KEGG" id="dre:100003157"/>
<dbReference type="AGR" id="ZFIN:ZDB-GENE-050419-73"/>
<dbReference type="CTD" id="10472"/>
<dbReference type="ZFIN" id="ZDB-GENE-050419-73">
    <property type="gene designation" value="zbtb18"/>
</dbReference>
<dbReference type="eggNOG" id="KOG1721">
    <property type="taxonomic scope" value="Eukaryota"/>
</dbReference>
<dbReference type="HOGENOM" id="CLU_004253_11_3_1"/>
<dbReference type="InParanoid" id="Q1L8W0"/>
<dbReference type="OMA" id="HCELINT"/>
<dbReference type="OrthoDB" id="4748970at2759"/>
<dbReference type="PhylomeDB" id="Q1L8W0"/>
<dbReference type="TreeFam" id="TF337437"/>
<dbReference type="PRO" id="PR:Q1L8W0"/>
<dbReference type="Proteomes" id="UP000000437">
    <property type="component" value="Chromosome 13"/>
</dbReference>
<dbReference type="Bgee" id="ENSDARG00000028228">
    <property type="expression patterns" value="Expressed in tail bud paraxial mesoderm and 72 other cell types or tissues"/>
</dbReference>
<dbReference type="ExpressionAtlas" id="Q1L8W0">
    <property type="expression patterns" value="baseline and differential"/>
</dbReference>
<dbReference type="GO" id="GO:0005634">
    <property type="term" value="C:nucleus"/>
    <property type="evidence" value="ECO:0000318"/>
    <property type="project" value="GO_Central"/>
</dbReference>
<dbReference type="GO" id="GO:0003677">
    <property type="term" value="F:DNA binding"/>
    <property type="evidence" value="ECO:0007669"/>
    <property type="project" value="UniProtKB-KW"/>
</dbReference>
<dbReference type="GO" id="GO:0000981">
    <property type="term" value="F:DNA-binding transcription factor activity, RNA polymerase II-specific"/>
    <property type="evidence" value="ECO:0000318"/>
    <property type="project" value="GO_Central"/>
</dbReference>
<dbReference type="GO" id="GO:0008270">
    <property type="term" value="F:zinc ion binding"/>
    <property type="evidence" value="ECO:0007669"/>
    <property type="project" value="UniProtKB-KW"/>
</dbReference>
<dbReference type="GO" id="GO:0006357">
    <property type="term" value="P:regulation of transcription by RNA polymerase II"/>
    <property type="evidence" value="ECO:0000318"/>
    <property type="project" value="GO_Central"/>
</dbReference>
<dbReference type="CDD" id="cd18324">
    <property type="entry name" value="BTB_POZ_ZBTB18_RP58"/>
    <property type="match status" value="1"/>
</dbReference>
<dbReference type="FunFam" id="3.30.160.60:FF:000646">
    <property type="entry name" value="Myeloid zinc finger 1"/>
    <property type="match status" value="1"/>
</dbReference>
<dbReference type="FunFam" id="3.30.160.60:FF:000114">
    <property type="entry name" value="Zinc finger and BTB domain-containing protein 18"/>
    <property type="match status" value="1"/>
</dbReference>
<dbReference type="FunFam" id="3.30.710.10:FF:000021">
    <property type="entry name" value="Zinc finger and BTB domain-containing protein 18"/>
    <property type="match status" value="1"/>
</dbReference>
<dbReference type="FunFam" id="3.30.160.60:FF:000892">
    <property type="entry name" value="zinc finger and BTB domain-containing protein 3"/>
    <property type="match status" value="1"/>
</dbReference>
<dbReference type="Gene3D" id="3.30.160.60">
    <property type="entry name" value="Classic Zinc Finger"/>
    <property type="match status" value="3"/>
</dbReference>
<dbReference type="Gene3D" id="3.30.710.10">
    <property type="entry name" value="Potassium Channel Kv1.1, Chain A"/>
    <property type="match status" value="1"/>
</dbReference>
<dbReference type="InterPro" id="IPR000210">
    <property type="entry name" value="BTB/POZ_dom"/>
</dbReference>
<dbReference type="InterPro" id="IPR011333">
    <property type="entry name" value="SKP1/BTB/POZ_sf"/>
</dbReference>
<dbReference type="InterPro" id="IPR036236">
    <property type="entry name" value="Znf_C2H2_sf"/>
</dbReference>
<dbReference type="InterPro" id="IPR013087">
    <property type="entry name" value="Znf_C2H2_type"/>
</dbReference>
<dbReference type="PANTHER" id="PTHR24394:SF18">
    <property type="entry name" value="ZINC FINGER AND BTB DOMAIN-CONTAINING PROTEIN 18"/>
    <property type="match status" value="1"/>
</dbReference>
<dbReference type="PANTHER" id="PTHR24394">
    <property type="entry name" value="ZINC FINGER PROTEIN"/>
    <property type="match status" value="1"/>
</dbReference>
<dbReference type="Pfam" id="PF00651">
    <property type="entry name" value="BTB"/>
    <property type="match status" value="1"/>
</dbReference>
<dbReference type="Pfam" id="PF00096">
    <property type="entry name" value="zf-C2H2"/>
    <property type="match status" value="2"/>
</dbReference>
<dbReference type="Pfam" id="PF13894">
    <property type="entry name" value="zf-C2H2_4"/>
    <property type="match status" value="1"/>
</dbReference>
<dbReference type="Pfam" id="PF12874">
    <property type="entry name" value="zf-met"/>
    <property type="match status" value="1"/>
</dbReference>
<dbReference type="SMART" id="SM00225">
    <property type="entry name" value="BTB"/>
    <property type="match status" value="1"/>
</dbReference>
<dbReference type="SMART" id="SM00355">
    <property type="entry name" value="ZnF_C2H2"/>
    <property type="match status" value="4"/>
</dbReference>
<dbReference type="SUPFAM" id="SSF57667">
    <property type="entry name" value="beta-beta-alpha zinc fingers"/>
    <property type="match status" value="3"/>
</dbReference>
<dbReference type="SUPFAM" id="SSF54695">
    <property type="entry name" value="POZ domain"/>
    <property type="match status" value="1"/>
</dbReference>
<dbReference type="PROSITE" id="PS50097">
    <property type="entry name" value="BTB"/>
    <property type="match status" value="1"/>
</dbReference>
<dbReference type="PROSITE" id="PS00028">
    <property type="entry name" value="ZINC_FINGER_C2H2_1"/>
    <property type="match status" value="4"/>
</dbReference>
<dbReference type="PROSITE" id="PS50157">
    <property type="entry name" value="ZINC_FINGER_C2H2_2"/>
    <property type="match status" value="4"/>
</dbReference>
<organism>
    <name type="scientific">Danio rerio</name>
    <name type="common">Zebrafish</name>
    <name type="synonym">Brachydanio rerio</name>
    <dbReference type="NCBI Taxonomy" id="7955"/>
    <lineage>
        <taxon>Eukaryota</taxon>
        <taxon>Metazoa</taxon>
        <taxon>Chordata</taxon>
        <taxon>Craniata</taxon>
        <taxon>Vertebrata</taxon>
        <taxon>Euteleostomi</taxon>
        <taxon>Actinopterygii</taxon>
        <taxon>Neopterygii</taxon>
        <taxon>Teleostei</taxon>
        <taxon>Ostariophysi</taxon>
        <taxon>Cypriniformes</taxon>
        <taxon>Danionidae</taxon>
        <taxon>Danioninae</taxon>
        <taxon>Danio</taxon>
    </lineage>
</organism>
<comment type="function">
    <text evidence="1">Transcriptional repressor that plays a role in various developmental processes. Specifically binds the consensus DNA sequence 5'-[AC]ACATCTG[GT][AC]-3' which contains the E box core, and acts by recruiting chromatin remodeling multiprotein complexes (By similarity).</text>
</comment>
<comment type="subcellular location">
    <subcellularLocation>
        <location evidence="1">Nucleus</location>
    </subcellularLocation>
</comment>
<comment type="similarity">
    <text evidence="5">Belongs to the krueppel C2H2-type zinc-finger protein family. ZBTB18 subfamily.</text>
</comment>
<gene>
    <name type="primary">zbtb18</name>
    <name type="synonym">znf238</name>
    <name type="ORF">si:ch211-221n23.1</name>
</gene>
<protein>
    <recommendedName>
        <fullName>Zinc finger and BTB domain-containing protein 18</fullName>
    </recommendedName>
    <alternativeName>
        <fullName>Zinc finger protein 238</fullName>
    </alternativeName>
</protein>
<evidence type="ECO:0000250" key="1"/>
<evidence type="ECO:0000255" key="2">
    <source>
        <dbReference type="PROSITE-ProRule" id="PRU00037"/>
    </source>
</evidence>
<evidence type="ECO:0000255" key="3">
    <source>
        <dbReference type="PROSITE-ProRule" id="PRU00042"/>
    </source>
</evidence>
<evidence type="ECO:0000256" key="4">
    <source>
        <dbReference type="SAM" id="MobiDB-lite"/>
    </source>
</evidence>
<evidence type="ECO:0000305" key="5"/>
<sequence length="537" mass="59193">MEFPDHSRHLLQCLSEQRHQGFLCDSTVLVGDAQFRAHRAVLASCSMYFHLFYKDQLDKRDIVHLNSDIVTAPAFALLLEFMYEGKLQFKSLPVEDVLAAASYLHMYDIVKVCKKKLKQKATAEADSTKREEDTSSCSDKVESFSEGGSTGRPATADLLQSDDEDMENKRDSPQEPGSMWMRLPSDRTTSPTTSPREAETHGPDAGKSPAGSPSSSSGSLSRRSAASRRVSADTDCVLDLSVKSSLGGGPGENIAGNPYFCSSVTPDSLQSALVQVKVEKDTGSDDDELVSGDYEMEHSGVKEPPSTNGTHLSLVAQRRLGLEAHLSALREASLASELERDDKGGDDDTDVLGGDSDRVQEAAGVESSLLPYVSSMLGAPHTQIFMCPLCNKVFPSPHILQIHLSTHFREQEGVRAKPAGDVNVPTCSICGKTFSCMYTLKRHERTHSGEKPYTCTTCGKSFQYSHNLSRHAVVHTREKPHACKWCERRFTQSGDLYRHIRKFHCELVNSLSVKSEALNLPTVRDWALEDSSQELWK</sequence>
<reference key="1">
    <citation type="submission" date="2004-03" db="EMBL/GenBank/DDBJ databases">
        <title>The BTB/POZ protein ZF238 (RP58) is essential for dorso-ventral CNS patterning and for interpreting SHH signaling.</title>
        <authorList>
            <person name="Fernandes M."/>
            <person name="Dahmane N."/>
        </authorList>
    </citation>
    <scope>NUCLEOTIDE SEQUENCE [MRNA]</scope>
</reference>
<reference key="2">
    <citation type="journal article" date="2013" name="Nature">
        <title>The zebrafish reference genome sequence and its relationship to the human genome.</title>
        <authorList>
            <person name="Howe K."/>
            <person name="Clark M.D."/>
            <person name="Torroja C.F."/>
            <person name="Torrance J."/>
            <person name="Berthelot C."/>
            <person name="Muffato M."/>
            <person name="Collins J.E."/>
            <person name="Humphray S."/>
            <person name="McLaren K."/>
            <person name="Matthews L."/>
            <person name="McLaren S."/>
            <person name="Sealy I."/>
            <person name="Caccamo M."/>
            <person name="Churcher C."/>
            <person name="Scott C."/>
            <person name="Barrett J.C."/>
            <person name="Koch R."/>
            <person name="Rauch G.J."/>
            <person name="White S."/>
            <person name="Chow W."/>
            <person name="Kilian B."/>
            <person name="Quintais L.T."/>
            <person name="Guerra-Assuncao J.A."/>
            <person name="Zhou Y."/>
            <person name="Gu Y."/>
            <person name="Yen J."/>
            <person name="Vogel J.H."/>
            <person name="Eyre T."/>
            <person name="Redmond S."/>
            <person name="Banerjee R."/>
            <person name="Chi J."/>
            <person name="Fu B."/>
            <person name="Langley E."/>
            <person name="Maguire S.F."/>
            <person name="Laird G.K."/>
            <person name="Lloyd D."/>
            <person name="Kenyon E."/>
            <person name="Donaldson S."/>
            <person name="Sehra H."/>
            <person name="Almeida-King J."/>
            <person name="Loveland J."/>
            <person name="Trevanion S."/>
            <person name="Jones M."/>
            <person name="Quail M."/>
            <person name="Willey D."/>
            <person name="Hunt A."/>
            <person name="Burton J."/>
            <person name="Sims S."/>
            <person name="McLay K."/>
            <person name="Plumb B."/>
            <person name="Davis J."/>
            <person name="Clee C."/>
            <person name="Oliver K."/>
            <person name="Clark R."/>
            <person name="Riddle C."/>
            <person name="Elliot D."/>
            <person name="Threadgold G."/>
            <person name="Harden G."/>
            <person name="Ware D."/>
            <person name="Begum S."/>
            <person name="Mortimore B."/>
            <person name="Kerry G."/>
            <person name="Heath P."/>
            <person name="Phillimore B."/>
            <person name="Tracey A."/>
            <person name="Corby N."/>
            <person name="Dunn M."/>
            <person name="Johnson C."/>
            <person name="Wood J."/>
            <person name="Clark S."/>
            <person name="Pelan S."/>
            <person name="Griffiths G."/>
            <person name="Smith M."/>
            <person name="Glithero R."/>
            <person name="Howden P."/>
            <person name="Barker N."/>
            <person name="Lloyd C."/>
            <person name="Stevens C."/>
            <person name="Harley J."/>
            <person name="Holt K."/>
            <person name="Panagiotidis G."/>
            <person name="Lovell J."/>
            <person name="Beasley H."/>
            <person name="Henderson C."/>
            <person name="Gordon D."/>
            <person name="Auger K."/>
            <person name="Wright D."/>
            <person name="Collins J."/>
            <person name="Raisen C."/>
            <person name="Dyer L."/>
            <person name="Leung K."/>
            <person name="Robertson L."/>
            <person name="Ambridge K."/>
            <person name="Leongamornlert D."/>
            <person name="McGuire S."/>
            <person name="Gilderthorp R."/>
            <person name="Griffiths C."/>
            <person name="Manthravadi D."/>
            <person name="Nichol S."/>
            <person name="Barker G."/>
            <person name="Whitehead S."/>
            <person name="Kay M."/>
            <person name="Brown J."/>
            <person name="Murnane C."/>
            <person name="Gray E."/>
            <person name="Humphries M."/>
            <person name="Sycamore N."/>
            <person name="Barker D."/>
            <person name="Saunders D."/>
            <person name="Wallis J."/>
            <person name="Babbage A."/>
            <person name="Hammond S."/>
            <person name="Mashreghi-Mohammadi M."/>
            <person name="Barr L."/>
            <person name="Martin S."/>
            <person name="Wray P."/>
            <person name="Ellington A."/>
            <person name="Matthews N."/>
            <person name="Ellwood M."/>
            <person name="Woodmansey R."/>
            <person name="Clark G."/>
            <person name="Cooper J."/>
            <person name="Tromans A."/>
            <person name="Grafham D."/>
            <person name="Skuce C."/>
            <person name="Pandian R."/>
            <person name="Andrews R."/>
            <person name="Harrison E."/>
            <person name="Kimberley A."/>
            <person name="Garnett J."/>
            <person name="Fosker N."/>
            <person name="Hall R."/>
            <person name="Garner P."/>
            <person name="Kelly D."/>
            <person name="Bird C."/>
            <person name="Palmer S."/>
            <person name="Gehring I."/>
            <person name="Berger A."/>
            <person name="Dooley C.M."/>
            <person name="Ersan-Urun Z."/>
            <person name="Eser C."/>
            <person name="Geiger H."/>
            <person name="Geisler M."/>
            <person name="Karotki L."/>
            <person name="Kirn A."/>
            <person name="Konantz J."/>
            <person name="Konantz M."/>
            <person name="Oberlander M."/>
            <person name="Rudolph-Geiger S."/>
            <person name="Teucke M."/>
            <person name="Lanz C."/>
            <person name="Raddatz G."/>
            <person name="Osoegawa K."/>
            <person name="Zhu B."/>
            <person name="Rapp A."/>
            <person name="Widaa S."/>
            <person name="Langford C."/>
            <person name="Yang F."/>
            <person name="Schuster S.C."/>
            <person name="Carter N.P."/>
            <person name="Harrow J."/>
            <person name="Ning Z."/>
            <person name="Herrero J."/>
            <person name="Searle S.M."/>
            <person name="Enright A."/>
            <person name="Geisler R."/>
            <person name="Plasterk R.H."/>
            <person name="Lee C."/>
            <person name="Westerfield M."/>
            <person name="de Jong P.J."/>
            <person name="Zon L.I."/>
            <person name="Postlethwait J.H."/>
            <person name="Nusslein-Volhard C."/>
            <person name="Hubbard T.J."/>
            <person name="Roest Crollius H."/>
            <person name="Rogers J."/>
            <person name="Stemple D.L."/>
        </authorList>
    </citation>
    <scope>NUCLEOTIDE SEQUENCE [LARGE SCALE GENOMIC DNA]</scope>
    <source>
        <strain>Tuebingen</strain>
    </source>
</reference>
<keyword id="KW-0238">DNA-binding</keyword>
<keyword id="KW-0479">Metal-binding</keyword>
<keyword id="KW-0539">Nucleus</keyword>
<keyword id="KW-1185">Reference proteome</keyword>
<keyword id="KW-0677">Repeat</keyword>
<keyword id="KW-0678">Repressor</keyword>
<keyword id="KW-0804">Transcription</keyword>
<keyword id="KW-0805">Transcription regulation</keyword>
<keyword id="KW-0862">Zinc</keyword>
<keyword id="KW-0863">Zinc-finger</keyword>
<proteinExistence type="evidence at transcript level"/>
<name>ZBT18_DANRE</name>
<accession>Q1L8W0</accession>
<accession>Q4JEX7</accession>
<feature type="chain" id="PRO_0000391925" description="Zinc finger and BTB domain-containing protein 18">
    <location>
        <begin position="1"/>
        <end position="537"/>
    </location>
</feature>
<feature type="domain" description="BTB" evidence="2">
    <location>
        <begin position="24"/>
        <end position="91"/>
    </location>
</feature>
<feature type="zinc finger region" description="C2H2-type 1" evidence="3">
    <location>
        <begin position="385"/>
        <end position="407"/>
    </location>
</feature>
<feature type="zinc finger region" description="C2H2-type 2" evidence="3">
    <location>
        <begin position="425"/>
        <end position="447"/>
    </location>
</feature>
<feature type="zinc finger region" description="C2H2-type 3" evidence="3">
    <location>
        <begin position="453"/>
        <end position="475"/>
    </location>
</feature>
<feature type="zinc finger region" description="C2H2-type 4" evidence="3">
    <location>
        <begin position="481"/>
        <end position="504"/>
    </location>
</feature>
<feature type="region of interest" description="Disordered" evidence="4">
    <location>
        <begin position="122"/>
        <end position="232"/>
    </location>
</feature>
<feature type="region of interest" description="Disordered" evidence="4">
    <location>
        <begin position="335"/>
        <end position="355"/>
    </location>
</feature>
<feature type="compositionally biased region" description="Basic and acidic residues" evidence="4">
    <location>
        <begin position="122"/>
        <end position="143"/>
    </location>
</feature>
<feature type="compositionally biased region" description="Low complexity" evidence="4">
    <location>
        <begin position="182"/>
        <end position="195"/>
    </location>
</feature>
<feature type="compositionally biased region" description="Low complexity" evidence="4">
    <location>
        <begin position="208"/>
        <end position="229"/>
    </location>
</feature>
<feature type="sequence conflict" description="In Ref. 1; AAT68457." evidence="5" ref="1">
    <original>S</original>
    <variation>T</variation>
    <location>
        <position position="217"/>
    </location>
</feature>